<protein>
    <recommendedName>
        <fullName evidence="2">Small ribosomal subunit protein uS12cz/uS12cy</fullName>
    </recommendedName>
    <alternativeName>
        <fullName evidence="3">30S ribosomal protein S12, chloroplastic</fullName>
    </alternativeName>
</protein>
<evidence type="ECO:0000250" key="1"/>
<evidence type="ECO:0000255" key="2">
    <source>
        <dbReference type="HAMAP-Rule" id="MF_00403"/>
    </source>
</evidence>
<evidence type="ECO:0000305" key="3"/>
<accession>A4QK42</accession>
<geneLocation type="chloroplast"/>
<comment type="function">
    <text evidence="1">With S4 and S5 plays an important role in translational accuracy. Located at the interface of the 30S and 50S subunits (By similarity).</text>
</comment>
<comment type="subunit">
    <text evidence="1">Part of the 30S ribosomal subunit.</text>
</comment>
<comment type="subcellular location">
    <subcellularLocation>
        <location>Plastid</location>
        <location>Chloroplast</location>
    </subcellularLocation>
</comment>
<comment type="similarity">
    <text evidence="3">Belongs to the universal ribosomal protein uS12 family.</text>
</comment>
<organism>
    <name type="scientific">Arabis hirsuta</name>
    <name type="common">Hairy rock-cress</name>
    <name type="synonym">Turritis hirsuta</name>
    <dbReference type="NCBI Taxonomy" id="78191"/>
    <lineage>
        <taxon>Eukaryota</taxon>
        <taxon>Viridiplantae</taxon>
        <taxon>Streptophyta</taxon>
        <taxon>Embryophyta</taxon>
        <taxon>Tracheophyta</taxon>
        <taxon>Spermatophyta</taxon>
        <taxon>Magnoliopsida</taxon>
        <taxon>eudicotyledons</taxon>
        <taxon>Gunneridae</taxon>
        <taxon>Pentapetalae</taxon>
        <taxon>rosids</taxon>
        <taxon>malvids</taxon>
        <taxon>Brassicales</taxon>
        <taxon>Brassicaceae</taxon>
        <taxon>Arabideae</taxon>
        <taxon>Arabis</taxon>
    </lineage>
</organism>
<gene>
    <name type="primary">rps12-A</name>
</gene>
<gene>
    <name type="primary">rps12-B</name>
</gene>
<reference key="1">
    <citation type="submission" date="2007-03" db="EMBL/GenBank/DDBJ databases">
        <title>Sequencing analysis of Arabis hirsuta chloroplast DNA.</title>
        <authorList>
            <person name="Hosouchi T."/>
            <person name="Tsuruoka H."/>
            <person name="Kotani H."/>
        </authorList>
    </citation>
    <scope>NUCLEOTIDE SEQUENCE [LARGE SCALE GENOMIC DNA]</scope>
</reference>
<feature type="chain" id="PRO_0000296062" description="Small ribosomal subunit protein uS12cz/uS12cy">
    <location>
        <begin position="1"/>
        <end position="123"/>
    </location>
</feature>
<keyword id="KW-0150">Chloroplast</keyword>
<keyword id="KW-0934">Plastid</keyword>
<keyword id="KW-0687">Ribonucleoprotein</keyword>
<keyword id="KW-0689">Ribosomal protein</keyword>
<keyword id="KW-0694">RNA-binding</keyword>
<keyword id="KW-0699">rRNA-binding</keyword>
<name>RR12_ARAHI</name>
<sequence length="123" mass="13795">MPTIKQLIRNTRQQIRNVTKSPALRGCPQRRGTCTRVYTITPKKPNSALRKVARVRLTSGFEITAYIPGIGHNLQEHSVVLVRGGRVKDLPGVRYHIVRGTLDAVGVKDRQQGRSKYGVKKPK</sequence>
<dbReference type="EMBL" id="AP009369">
    <property type="protein sequence ID" value="BAF50047.1"/>
    <property type="molecule type" value="Genomic_DNA"/>
</dbReference>
<dbReference type="EMBL" id="AP009369">
    <property type="protein sequence ID" value="BAF50070.1"/>
    <property type="molecule type" value="Genomic_DNA"/>
</dbReference>
<dbReference type="SMR" id="A4QK42"/>
<dbReference type="GO" id="GO:0009507">
    <property type="term" value="C:chloroplast"/>
    <property type="evidence" value="ECO:0007669"/>
    <property type="project" value="UniProtKB-SubCell"/>
</dbReference>
<dbReference type="GO" id="GO:0015935">
    <property type="term" value="C:small ribosomal subunit"/>
    <property type="evidence" value="ECO:0007669"/>
    <property type="project" value="InterPro"/>
</dbReference>
<dbReference type="GO" id="GO:0019843">
    <property type="term" value="F:rRNA binding"/>
    <property type="evidence" value="ECO:0007669"/>
    <property type="project" value="UniProtKB-UniRule"/>
</dbReference>
<dbReference type="GO" id="GO:0003735">
    <property type="term" value="F:structural constituent of ribosome"/>
    <property type="evidence" value="ECO:0007669"/>
    <property type="project" value="InterPro"/>
</dbReference>
<dbReference type="GO" id="GO:0006412">
    <property type="term" value="P:translation"/>
    <property type="evidence" value="ECO:0007669"/>
    <property type="project" value="UniProtKB-UniRule"/>
</dbReference>
<dbReference type="CDD" id="cd03368">
    <property type="entry name" value="Ribosomal_S12"/>
    <property type="match status" value="1"/>
</dbReference>
<dbReference type="FunFam" id="2.40.50.140:FF:000008">
    <property type="entry name" value="30S ribosomal protein S12, chloroplastic"/>
    <property type="match status" value="1"/>
</dbReference>
<dbReference type="Gene3D" id="2.40.50.140">
    <property type="entry name" value="Nucleic acid-binding proteins"/>
    <property type="match status" value="1"/>
</dbReference>
<dbReference type="HAMAP" id="MF_00403_B">
    <property type="entry name" value="Ribosomal_uS12_B"/>
    <property type="match status" value="1"/>
</dbReference>
<dbReference type="InterPro" id="IPR012340">
    <property type="entry name" value="NA-bd_OB-fold"/>
</dbReference>
<dbReference type="InterPro" id="IPR006032">
    <property type="entry name" value="Ribosomal_uS12"/>
</dbReference>
<dbReference type="InterPro" id="IPR005679">
    <property type="entry name" value="Ribosomal_uS12_bac"/>
</dbReference>
<dbReference type="NCBIfam" id="TIGR00981">
    <property type="entry name" value="rpsL_bact"/>
    <property type="match status" value="1"/>
</dbReference>
<dbReference type="PANTHER" id="PTHR11652">
    <property type="entry name" value="30S RIBOSOMAL PROTEIN S12 FAMILY MEMBER"/>
    <property type="match status" value="1"/>
</dbReference>
<dbReference type="Pfam" id="PF00164">
    <property type="entry name" value="Ribosom_S12_S23"/>
    <property type="match status" value="1"/>
</dbReference>
<dbReference type="PIRSF" id="PIRSF002133">
    <property type="entry name" value="Ribosomal_S12/S23"/>
    <property type="match status" value="1"/>
</dbReference>
<dbReference type="PRINTS" id="PR01034">
    <property type="entry name" value="RIBOSOMALS12"/>
</dbReference>
<dbReference type="SUPFAM" id="SSF50249">
    <property type="entry name" value="Nucleic acid-binding proteins"/>
    <property type="match status" value="1"/>
</dbReference>
<dbReference type="PROSITE" id="PS00055">
    <property type="entry name" value="RIBOSOMAL_S12"/>
    <property type="match status" value="1"/>
</dbReference>
<proteinExistence type="inferred from homology"/>